<protein>
    <recommendedName>
        <fullName evidence="1">Protein-export protein SecB</fullName>
    </recommendedName>
</protein>
<keyword id="KW-0143">Chaperone</keyword>
<keyword id="KW-0963">Cytoplasm</keyword>
<keyword id="KW-0653">Protein transport</keyword>
<keyword id="KW-0811">Translocation</keyword>
<keyword id="KW-0813">Transport</keyword>
<comment type="function">
    <text evidence="1">One of the proteins required for the normal export of preproteins out of the cell cytoplasm. It is a molecular chaperone that binds to a subset of precursor proteins, maintaining them in a translocation-competent state. It also specifically binds to its receptor SecA.</text>
</comment>
<comment type="subunit">
    <text evidence="1">Homotetramer, a dimer of dimers. One homotetramer interacts with 1 SecA dimer.</text>
</comment>
<comment type="subcellular location">
    <subcellularLocation>
        <location evidence="1">Cytoplasm</location>
    </subcellularLocation>
</comment>
<comment type="similarity">
    <text evidence="1">Belongs to the SecB family.</text>
</comment>
<accession>A2S628</accession>
<feature type="chain" id="PRO_1000062461" description="Protein-export protein SecB">
    <location>
        <begin position="1"/>
        <end position="159"/>
    </location>
</feature>
<organism>
    <name type="scientific">Burkholderia mallei (strain NCTC 10229)</name>
    <dbReference type="NCBI Taxonomy" id="412022"/>
    <lineage>
        <taxon>Bacteria</taxon>
        <taxon>Pseudomonadati</taxon>
        <taxon>Pseudomonadota</taxon>
        <taxon>Betaproteobacteria</taxon>
        <taxon>Burkholderiales</taxon>
        <taxon>Burkholderiaceae</taxon>
        <taxon>Burkholderia</taxon>
        <taxon>pseudomallei group</taxon>
    </lineage>
</organism>
<reference key="1">
    <citation type="journal article" date="2010" name="Genome Biol. Evol.">
        <title>Continuing evolution of Burkholderia mallei through genome reduction and large-scale rearrangements.</title>
        <authorList>
            <person name="Losada L."/>
            <person name="Ronning C.M."/>
            <person name="DeShazer D."/>
            <person name="Woods D."/>
            <person name="Fedorova N."/>
            <person name="Kim H.S."/>
            <person name="Shabalina S.A."/>
            <person name="Pearson T.R."/>
            <person name="Brinkac L."/>
            <person name="Tan P."/>
            <person name="Nandi T."/>
            <person name="Crabtree J."/>
            <person name="Badger J."/>
            <person name="Beckstrom-Sternberg S."/>
            <person name="Saqib M."/>
            <person name="Schutzer S.E."/>
            <person name="Keim P."/>
            <person name="Nierman W.C."/>
        </authorList>
    </citation>
    <scope>NUCLEOTIDE SEQUENCE [LARGE SCALE GENOMIC DNA]</scope>
    <source>
        <strain>NCTC 10229</strain>
    </source>
</reference>
<evidence type="ECO:0000255" key="1">
    <source>
        <dbReference type="HAMAP-Rule" id="MF_00821"/>
    </source>
</evidence>
<name>SECB_BURM9</name>
<sequence length="159" mass="17671">MSDVENQPFFNIQRIYLKDLSLEQPNSPAIFLEQEMPAVEVEVDVKAERLAENVYEIVVAGTVTAKVREKVAFLVEAKQAGIFDIRNIPAEQIDPLCGIACPTILFPYLRSNIADSITRAGFPPIHLAEINFQALYEQRLAEISQQQQQGGAPNGTTLN</sequence>
<dbReference type="EMBL" id="CP000546">
    <property type="protein sequence ID" value="ABN00710.1"/>
    <property type="molecule type" value="Genomic_DNA"/>
</dbReference>
<dbReference type="RefSeq" id="WP_004198004.1">
    <property type="nucleotide sequence ID" value="NC_008836.1"/>
</dbReference>
<dbReference type="SMR" id="A2S628"/>
<dbReference type="GeneID" id="93058964"/>
<dbReference type="KEGG" id="bml:BMA10229_A1414"/>
<dbReference type="HOGENOM" id="CLU_111574_1_0_4"/>
<dbReference type="Proteomes" id="UP000002283">
    <property type="component" value="Chromosome I"/>
</dbReference>
<dbReference type="GO" id="GO:0005737">
    <property type="term" value="C:cytoplasm"/>
    <property type="evidence" value="ECO:0007669"/>
    <property type="project" value="UniProtKB-SubCell"/>
</dbReference>
<dbReference type="GO" id="GO:0051082">
    <property type="term" value="F:unfolded protein binding"/>
    <property type="evidence" value="ECO:0007669"/>
    <property type="project" value="InterPro"/>
</dbReference>
<dbReference type="GO" id="GO:0006457">
    <property type="term" value="P:protein folding"/>
    <property type="evidence" value="ECO:0007669"/>
    <property type="project" value="UniProtKB-UniRule"/>
</dbReference>
<dbReference type="GO" id="GO:0051262">
    <property type="term" value="P:protein tetramerization"/>
    <property type="evidence" value="ECO:0007669"/>
    <property type="project" value="InterPro"/>
</dbReference>
<dbReference type="GO" id="GO:0015031">
    <property type="term" value="P:protein transport"/>
    <property type="evidence" value="ECO:0007669"/>
    <property type="project" value="UniProtKB-UniRule"/>
</dbReference>
<dbReference type="Gene3D" id="3.10.420.10">
    <property type="entry name" value="SecB-like"/>
    <property type="match status" value="1"/>
</dbReference>
<dbReference type="HAMAP" id="MF_00821">
    <property type="entry name" value="SecB"/>
    <property type="match status" value="1"/>
</dbReference>
<dbReference type="InterPro" id="IPR003708">
    <property type="entry name" value="SecB"/>
</dbReference>
<dbReference type="InterPro" id="IPR035958">
    <property type="entry name" value="SecB-like_sf"/>
</dbReference>
<dbReference type="NCBIfam" id="NF004392">
    <property type="entry name" value="PRK05751.1-3"/>
    <property type="match status" value="1"/>
</dbReference>
<dbReference type="NCBIfam" id="NF004394">
    <property type="entry name" value="PRK05751.1-5"/>
    <property type="match status" value="1"/>
</dbReference>
<dbReference type="NCBIfam" id="TIGR00809">
    <property type="entry name" value="secB"/>
    <property type="match status" value="1"/>
</dbReference>
<dbReference type="PANTHER" id="PTHR36918">
    <property type="match status" value="1"/>
</dbReference>
<dbReference type="PANTHER" id="PTHR36918:SF1">
    <property type="entry name" value="PROTEIN-EXPORT PROTEIN SECB"/>
    <property type="match status" value="1"/>
</dbReference>
<dbReference type="Pfam" id="PF02556">
    <property type="entry name" value="SecB"/>
    <property type="match status" value="1"/>
</dbReference>
<dbReference type="PRINTS" id="PR01594">
    <property type="entry name" value="SECBCHAPRONE"/>
</dbReference>
<dbReference type="SUPFAM" id="SSF54611">
    <property type="entry name" value="SecB-like"/>
    <property type="match status" value="1"/>
</dbReference>
<proteinExistence type="inferred from homology"/>
<gene>
    <name evidence="1" type="primary">secB</name>
    <name type="ordered locus">BMA10229_A1414</name>
</gene>